<reference key="1">
    <citation type="journal article" date="2003" name="Genome Res.">
        <title>The secreted protein discovery initiative (SPDI), a large-scale effort to identify novel human secreted and transmembrane proteins: a bioinformatics assessment.</title>
        <authorList>
            <person name="Clark H.F."/>
            <person name="Gurney A.L."/>
            <person name="Abaya E."/>
            <person name="Baker K."/>
            <person name="Baldwin D.T."/>
            <person name="Brush J."/>
            <person name="Chen J."/>
            <person name="Chow B."/>
            <person name="Chui C."/>
            <person name="Crowley C."/>
            <person name="Currell B."/>
            <person name="Deuel B."/>
            <person name="Dowd P."/>
            <person name="Eaton D."/>
            <person name="Foster J.S."/>
            <person name="Grimaldi C."/>
            <person name="Gu Q."/>
            <person name="Hass P.E."/>
            <person name="Heldens S."/>
            <person name="Huang A."/>
            <person name="Kim H.S."/>
            <person name="Klimowski L."/>
            <person name="Jin Y."/>
            <person name="Johnson S."/>
            <person name="Lee J."/>
            <person name="Lewis L."/>
            <person name="Liao D."/>
            <person name="Mark M.R."/>
            <person name="Robbie E."/>
            <person name="Sanchez C."/>
            <person name="Schoenfeld J."/>
            <person name="Seshagiri S."/>
            <person name="Simmons L."/>
            <person name="Singh J."/>
            <person name="Smith V."/>
            <person name="Stinson J."/>
            <person name="Vagts A."/>
            <person name="Vandlen R.L."/>
            <person name="Watanabe C."/>
            <person name="Wieand D."/>
            <person name="Woods K."/>
            <person name="Xie M.-H."/>
            <person name="Yansura D.G."/>
            <person name="Yi S."/>
            <person name="Yu G."/>
            <person name="Yuan J."/>
            <person name="Zhang M."/>
            <person name="Zhang Z."/>
            <person name="Goddard A.D."/>
            <person name="Wood W.I."/>
            <person name="Godowski P.J."/>
            <person name="Gray A.M."/>
        </authorList>
    </citation>
    <scope>NUCLEOTIDE SEQUENCE [LARGE SCALE MRNA] (ISOFORM 2)</scope>
</reference>
<reference key="2">
    <citation type="journal article" date="2003" name="Nature">
        <title>The DNA sequence and analysis of human chromosome 14.</title>
        <authorList>
            <person name="Heilig R."/>
            <person name="Eckenberg R."/>
            <person name="Petit J.-L."/>
            <person name="Fonknechten N."/>
            <person name="Da Silva C."/>
            <person name="Cattolico L."/>
            <person name="Levy M."/>
            <person name="Barbe V."/>
            <person name="De Berardinis V."/>
            <person name="Ureta-Vidal A."/>
            <person name="Pelletier E."/>
            <person name="Vico V."/>
            <person name="Anthouard V."/>
            <person name="Rowen L."/>
            <person name="Madan A."/>
            <person name="Qin S."/>
            <person name="Sun H."/>
            <person name="Du H."/>
            <person name="Pepin K."/>
            <person name="Artiguenave F."/>
            <person name="Robert C."/>
            <person name="Cruaud C."/>
            <person name="Bruels T."/>
            <person name="Jaillon O."/>
            <person name="Friedlander L."/>
            <person name="Samson G."/>
            <person name="Brottier P."/>
            <person name="Cure S."/>
            <person name="Segurens B."/>
            <person name="Aniere F."/>
            <person name="Samain S."/>
            <person name="Crespeau H."/>
            <person name="Abbasi N."/>
            <person name="Aiach N."/>
            <person name="Boscus D."/>
            <person name="Dickhoff R."/>
            <person name="Dors M."/>
            <person name="Dubois I."/>
            <person name="Friedman C."/>
            <person name="Gouyvenoux M."/>
            <person name="James R."/>
            <person name="Madan A."/>
            <person name="Mairey-Estrada B."/>
            <person name="Mangenot S."/>
            <person name="Martins N."/>
            <person name="Menard M."/>
            <person name="Oztas S."/>
            <person name="Ratcliffe A."/>
            <person name="Shaffer T."/>
            <person name="Trask B."/>
            <person name="Vacherie B."/>
            <person name="Bellemere C."/>
            <person name="Belser C."/>
            <person name="Besnard-Gonnet M."/>
            <person name="Bartol-Mavel D."/>
            <person name="Boutard M."/>
            <person name="Briez-Silla S."/>
            <person name="Combette S."/>
            <person name="Dufosse-Laurent V."/>
            <person name="Ferron C."/>
            <person name="Lechaplais C."/>
            <person name="Louesse C."/>
            <person name="Muselet D."/>
            <person name="Magdelenat G."/>
            <person name="Pateau E."/>
            <person name="Petit E."/>
            <person name="Sirvain-Trukniewicz P."/>
            <person name="Trybou A."/>
            <person name="Vega-Czarny N."/>
            <person name="Bataille E."/>
            <person name="Bluet E."/>
            <person name="Bordelais I."/>
            <person name="Dubois M."/>
            <person name="Dumont C."/>
            <person name="Guerin T."/>
            <person name="Haffray S."/>
            <person name="Hammadi R."/>
            <person name="Muanga J."/>
            <person name="Pellouin V."/>
            <person name="Robert D."/>
            <person name="Wunderle E."/>
            <person name="Gauguet G."/>
            <person name="Roy A."/>
            <person name="Sainte-Marthe L."/>
            <person name="Verdier J."/>
            <person name="Verdier-Discala C."/>
            <person name="Hillier L.W."/>
            <person name="Fulton L."/>
            <person name="McPherson J."/>
            <person name="Matsuda F."/>
            <person name="Wilson R."/>
            <person name="Scarpelli C."/>
            <person name="Gyapay G."/>
            <person name="Wincker P."/>
            <person name="Saurin W."/>
            <person name="Quetier F."/>
            <person name="Waterston R."/>
            <person name="Hood L."/>
            <person name="Weissenbach J."/>
        </authorList>
    </citation>
    <scope>NUCLEOTIDE SEQUENCE [LARGE SCALE GENOMIC DNA]</scope>
</reference>
<reference key="3">
    <citation type="journal article" date="2004" name="Genome Res.">
        <title>The status, quality, and expansion of the NIH full-length cDNA project: the Mammalian Gene Collection (MGC).</title>
        <authorList>
            <consortium name="The MGC Project Team"/>
        </authorList>
    </citation>
    <scope>NUCLEOTIDE SEQUENCE [LARGE SCALE MRNA] (ISOFORM 2)</scope>
</reference>
<reference key="4">
    <citation type="journal article" date="2001" name="DNA Res.">
        <title>Prediction of the coding sequences of unidentified human genes. XX. The complete sequences of 100 new cDNA clones from brain which code for large proteins in vitro.</title>
        <authorList>
            <person name="Nagase T."/>
            <person name="Nakayama M."/>
            <person name="Nakajima D."/>
            <person name="Kikuno R."/>
            <person name="Ohara O."/>
        </authorList>
    </citation>
    <scope>NUCLEOTIDE SEQUENCE [LARGE SCALE MRNA] OF 250-782 (ISOFORM 1)</scope>
    <source>
        <tissue>Brain</tissue>
    </source>
</reference>
<reference key="5">
    <citation type="journal article" date="2006" name="Int. J. Mol. Med.">
        <title>Comparative genomics on HHIP family orthologs.</title>
        <authorList>
            <person name="Katoh Y."/>
            <person name="Katoh M."/>
        </authorList>
    </citation>
    <scope>IDENTIFICATION</scope>
    <scope>NOMENCLATURE</scope>
</reference>
<organism>
    <name type="scientific">Homo sapiens</name>
    <name type="common">Human</name>
    <dbReference type="NCBI Taxonomy" id="9606"/>
    <lineage>
        <taxon>Eukaryota</taxon>
        <taxon>Metazoa</taxon>
        <taxon>Chordata</taxon>
        <taxon>Craniata</taxon>
        <taxon>Vertebrata</taxon>
        <taxon>Euteleostomi</taxon>
        <taxon>Mammalia</taxon>
        <taxon>Eutheria</taxon>
        <taxon>Euarchontoglires</taxon>
        <taxon>Primates</taxon>
        <taxon>Haplorrhini</taxon>
        <taxon>Catarrhini</taxon>
        <taxon>Hominidae</taxon>
        <taxon>Homo</taxon>
    </lineage>
</organism>
<keyword id="KW-0025">Alternative splicing</keyword>
<keyword id="KW-1015">Disulfide bond</keyword>
<keyword id="KW-0325">Glycoprotein</keyword>
<keyword id="KW-1267">Proteomics identification</keyword>
<keyword id="KW-1185">Reference proteome</keyword>
<keyword id="KW-0964">Secreted</keyword>
<keyword id="KW-0732">Signal</keyword>
<name>HIPL1_HUMAN</name>
<dbReference type="EMBL" id="AY358173">
    <property type="protein sequence ID" value="AAQ88540.1"/>
    <property type="molecule type" value="mRNA"/>
</dbReference>
<dbReference type="EMBL" id="AL160313">
    <property type="status" value="NOT_ANNOTATED_CDS"/>
    <property type="molecule type" value="Genomic_DNA"/>
</dbReference>
<dbReference type="EMBL" id="BC132877">
    <property type="protein sequence ID" value="AAI32878.1"/>
    <property type="molecule type" value="mRNA"/>
</dbReference>
<dbReference type="EMBL" id="BC136577">
    <property type="protein sequence ID" value="AAI36578.1"/>
    <property type="molecule type" value="mRNA"/>
</dbReference>
<dbReference type="EMBL" id="AB058725">
    <property type="protein sequence ID" value="BAB47451.1"/>
    <property type="molecule type" value="mRNA"/>
</dbReference>
<dbReference type="CCDS" id="CCDS45162.1">
    <molecule id="Q96JK4-1"/>
</dbReference>
<dbReference type="CCDS" id="CCDS9953.1">
    <molecule id="Q96JK4-2"/>
</dbReference>
<dbReference type="RefSeq" id="NP_001120730.1">
    <molecule id="Q96JK4-1"/>
    <property type="nucleotide sequence ID" value="NM_001127258.3"/>
</dbReference>
<dbReference type="RefSeq" id="NP_115801.3">
    <molecule id="Q96JK4-2"/>
    <property type="nucleotide sequence ID" value="NM_032425.5"/>
</dbReference>
<dbReference type="SMR" id="Q96JK4"/>
<dbReference type="BioGRID" id="124078">
    <property type="interactions" value="34"/>
</dbReference>
<dbReference type="IntAct" id="Q96JK4">
    <property type="interactions" value="27"/>
</dbReference>
<dbReference type="STRING" id="9606.ENSP00000330601"/>
<dbReference type="GlyCosmos" id="Q96JK4">
    <property type="glycosylation" value="1 site, No reported glycans"/>
</dbReference>
<dbReference type="GlyGen" id="Q96JK4">
    <property type="glycosylation" value="2 sites"/>
</dbReference>
<dbReference type="iPTMnet" id="Q96JK4"/>
<dbReference type="PhosphoSitePlus" id="Q96JK4"/>
<dbReference type="BioMuta" id="HHIPL1"/>
<dbReference type="DMDM" id="166218135"/>
<dbReference type="jPOST" id="Q96JK4"/>
<dbReference type="MassIVE" id="Q96JK4"/>
<dbReference type="PaxDb" id="9606-ENSP00000330601"/>
<dbReference type="PeptideAtlas" id="Q96JK4"/>
<dbReference type="ProteomicsDB" id="76977">
    <molecule id="Q96JK4-1"/>
</dbReference>
<dbReference type="ProteomicsDB" id="76978">
    <molecule id="Q96JK4-2"/>
</dbReference>
<dbReference type="Antibodypedia" id="57719">
    <property type="antibodies" value="51 antibodies from 16 providers"/>
</dbReference>
<dbReference type="DNASU" id="84439"/>
<dbReference type="Ensembl" id="ENST00000330710.10">
    <molecule id="Q96JK4-1"/>
    <property type="protein sequence ID" value="ENSP00000330601.5"/>
    <property type="gene ID" value="ENSG00000182218.10"/>
</dbReference>
<dbReference type="Ensembl" id="ENST00000357223.2">
    <molecule id="Q96JK4-2"/>
    <property type="protein sequence ID" value="ENSP00000349757.2"/>
    <property type="gene ID" value="ENSG00000182218.10"/>
</dbReference>
<dbReference type="GeneID" id="84439"/>
<dbReference type="KEGG" id="hsa:84439"/>
<dbReference type="MANE-Select" id="ENST00000330710.10">
    <property type="protein sequence ID" value="ENSP00000330601.5"/>
    <property type="RefSeq nucleotide sequence ID" value="NM_001127258.3"/>
    <property type="RefSeq protein sequence ID" value="NP_001120730.1"/>
</dbReference>
<dbReference type="UCSC" id="uc001ygl.2">
    <molecule id="Q96JK4-1"/>
    <property type="organism name" value="human"/>
</dbReference>
<dbReference type="AGR" id="HGNC:19710"/>
<dbReference type="CTD" id="84439"/>
<dbReference type="DisGeNET" id="84439"/>
<dbReference type="GeneCards" id="HHIPL1"/>
<dbReference type="HGNC" id="HGNC:19710">
    <property type="gene designation" value="HHIPL1"/>
</dbReference>
<dbReference type="HPA" id="ENSG00000182218">
    <property type="expression patterns" value="Tissue enhanced (brain)"/>
</dbReference>
<dbReference type="neXtProt" id="NX_Q96JK4"/>
<dbReference type="OpenTargets" id="ENSG00000182218"/>
<dbReference type="PharmGKB" id="PA162390893"/>
<dbReference type="VEuPathDB" id="HostDB:ENSG00000182218"/>
<dbReference type="eggNOG" id="ENOG502QQKP">
    <property type="taxonomic scope" value="Eukaryota"/>
</dbReference>
<dbReference type="GeneTree" id="ENSGT00940000162083"/>
<dbReference type="HOGENOM" id="CLU_012344_2_3_1"/>
<dbReference type="InParanoid" id="Q96JK4"/>
<dbReference type="OMA" id="YSVEVRY"/>
<dbReference type="OrthoDB" id="10266706at2759"/>
<dbReference type="PAN-GO" id="Q96JK4">
    <property type="GO annotations" value="0 GO annotations based on evolutionary models"/>
</dbReference>
<dbReference type="PhylomeDB" id="Q96JK4"/>
<dbReference type="TreeFam" id="TF329059"/>
<dbReference type="PathwayCommons" id="Q96JK4"/>
<dbReference type="SignaLink" id="Q96JK4"/>
<dbReference type="BioGRID-ORCS" id="84439">
    <property type="hits" value="12 hits in 1141 CRISPR screens"/>
</dbReference>
<dbReference type="ChiTaRS" id="HHIPL1">
    <property type="organism name" value="human"/>
</dbReference>
<dbReference type="GenomeRNAi" id="84439"/>
<dbReference type="Pharos" id="Q96JK4">
    <property type="development level" value="Tdark"/>
</dbReference>
<dbReference type="PRO" id="PR:Q96JK4"/>
<dbReference type="Proteomes" id="UP000005640">
    <property type="component" value="Chromosome 14"/>
</dbReference>
<dbReference type="RNAct" id="Q96JK4">
    <property type="molecule type" value="protein"/>
</dbReference>
<dbReference type="Bgee" id="ENSG00000182218">
    <property type="expression patterns" value="Expressed in caudate nucleus and 87 other cell types or tissues"/>
</dbReference>
<dbReference type="ExpressionAtlas" id="Q96JK4">
    <property type="expression patterns" value="baseline and differential"/>
</dbReference>
<dbReference type="GO" id="GO:0005576">
    <property type="term" value="C:extracellular region"/>
    <property type="evidence" value="ECO:0007669"/>
    <property type="project" value="UniProtKB-SubCell"/>
</dbReference>
<dbReference type="GO" id="GO:0016020">
    <property type="term" value="C:membrane"/>
    <property type="evidence" value="ECO:0007669"/>
    <property type="project" value="InterPro"/>
</dbReference>
<dbReference type="GO" id="GO:0060840">
    <property type="term" value="P:artery development"/>
    <property type="evidence" value="ECO:0007669"/>
    <property type="project" value="Ensembl"/>
</dbReference>
<dbReference type="GO" id="GO:0016477">
    <property type="term" value="P:cell migration"/>
    <property type="evidence" value="ECO:0007669"/>
    <property type="project" value="Ensembl"/>
</dbReference>
<dbReference type="GO" id="GO:0008283">
    <property type="term" value="P:cell population proliferation"/>
    <property type="evidence" value="ECO:0007669"/>
    <property type="project" value="Ensembl"/>
</dbReference>
<dbReference type="GO" id="GO:0007224">
    <property type="term" value="P:smoothened signaling pathway"/>
    <property type="evidence" value="ECO:0007669"/>
    <property type="project" value="Ensembl"/>
</dbReference>
<dbReference type="FunFam" id="3.10.250.10:FF:000001">
    <property type="entry name" value="Lysyl oxidase 4 isoform X1"/>
    <property type="match status" value="1"/>
</dbReference>
<dbReference type="Gene3D" id="3.10.250.10">
    <property type="entry name" value="SRCR-like domain"/>
    <property type="match status" value="1"/>
</dbReference>
<dbReference type="Gene3D" id="2.120.10.30">
    <property type="entry name" value="TolB, C-terminal domain"/>
    <property type="match status" value="1"/>
</dbReference>
<dbReference type="InterPro" id="IPR011042">
    <property type="entry name" value="6-blade_b-propeller_TolB-like"/>
</dbReference>
<dbReference type="InterPro" id="IPR018143">
    <property type="entry name" value="Folate_rcpt-like"/>
</dbReference>
<dbReference type="InterPro" id="IPR012938">
    <property type="entry name" value="Glc/Sorbosone_DH"/>
</dbReference>
<dbReference type="InterPro" id="IPR011041">
    <property type="entry name" value="Quinoprot_gluc/sorb_DH_b-prop"/>
</dbReference>
<dbReference type="InterPro" id="IPR001190">
    <property type="entry name" value="SRCR"/>
</dbReference>
<dbReference type="InterPro" id="IPR036772">
    <property type="entry name" value="SRCR-like_dom_sf"/>
</dbReference>
<dbReference type="PANTHER" id="PTHR19328">
    <property type="entry name" value="HEDGEHOG-INTERACTING PROTEIN"/>
    <property type="match status" value="1"/>
</dbReference>
<dbReference type="PANTHER" id="PTHR19328:SF32">
    <property type="entry name" value="HHIP-LIKE PROTEIN 1"/>
    <property type="match status" value="1"/>
</dbReference>
<dbReference type="Pfam" id="PF03024">
    <property type="entry name" value="Folate_rec"/>
    <property type="match status" value="1"/>
</dbReference>
<dbReference type="Pfam" id="PF07995">
    <property type="entry name" value="GSDH"/>
    <property type="match status" value="1"/>
</dbReference>
<dbReference type="Pfam" id="PF00530">
    <property type="entry name" value="SRCR"/>
    <property type="match status" value="1"/>
</dbReference>
<dbReference type="PRINTS" id="PR00258">
    <property type="entry name" value="SPERACTRCPTR"/>
</dbReference>
<dbReference type="SMART" id="SM00202">
    <property type="entry name" value="SR"/>
    <property type="match status" value="1"/>
</dbReference>
<dbReference type="SUPFAM" id="SSF50952">
    <property type="entry name" value="Soluble quinoprotein glucose dehydrogenase"/>
    <property type="match status" value="1"/>
</dbReference>
<dbReference type="SUPFAM" id="SSF56487">
    <property type="entry name" value="SRCR-like"/>
    <property type="match status" value="1"/>
</dbReference>
<dbReference type="PROSITE" id="PS00420">
    <property type="entry name" value="SRCR_1"/>
    <property type="match status" value="1"/>
</dbReference>
<dbReference type="PROSITE" id="PS50287">
    <property type="entry name" value="SRCR_2"/>
    <property type="match status" value="1"/>
</dbReference>
<comment type="interaction">
    <interactant intactId="EBI-12083878">
        <id>Q96JK4-2</id>
    </interactant>
    <interactant intactId="EBI-11524452">
        <id>Q8N9N5-2</id>
        <label>BANP</label>
    </interactant>
    <organismsDiffer>false</organismsDiffer>
    <experiments>3</experiments>
</comment>
<comment type="interaction">
    <interactant intactId="EBI-12083878">
        <id>Q96JK4-2</id>
    </interactant>
    <interactant intactId="EBI-743414">
        <id>O95967</id>
        <label>EFEMP2</label>
    </interactant>
    <organismsDiffer>false</organismsDiffer>
    <experiments>3</experiments>
</comment>
<comment type="interaction">
    <interactant intactId="EBI-12083878">
        <id>Q96JK4-2</id>
    </interactant>
    <interactant intactId="EBI-11749135">
        <id>Q8IUG1</id>
        <label>KRTAP1-3</label>
    </interactant>
    <organismsDiffer>false</organismsDiffer>
    <experiments>3</experiments>
</comment>
<comment type="interaction">
    <interactant intactId="EBI-12083878">
        <id>Q96JK4-2</id>
    </interactant>
    <interactant intactId="EBI-11742836">
        <id>Q16656-4</id>
        <label>NRF1</label>
    </interactant>
    <organismsDiffer>false</organismsDiffer>
    <experiments>3</experiments>
</comment>
<comment type="subcellular location">
    <subcellularLocation>
        <location evidence="6">Secreted</location>
    </subcellularLocation>
</comment>
<comment type="alternative products">
    <event type="alternative splicing"/>
    <isoform>
        <id>Q96JK4-1</id>
        <name>1</name>
        <sequence type="displayed"/>
    </isoform>
    <isoform>
        <id>Q96JK4-2</id>
        <name>2</name>
        <sequence type="described" ref="VSP_030455 VSP_030456"/>
    </isoform>
</comment>
<comment type="similarity">
    <text evidence="6">Belongs to the HHIP family.</text>
</comment>
<feature type="signal peptide" evidence="1">
    <location>
        <begin position="1"/>
        <end position="19"/>
    </location>
</feature>
<feature type="chain" id="PRO_0000314962" description="HHIP-like protein 1">
    <location>
        <begin position="20"/>
        <end position="782"/>
    </location>
</feature>
<feature type="domain" description="SRCR" evidence="2">
    <location>
        <begin position="673"/>
        <end position="776"/>
    </location>
</feature>
<feature type="region of interest" description="Disordered" evidence="3">
    <location>
        <begin position="604"/>
        <end position="666"/>
    </location>
</feature>
<feature type="compositionally biased region" description="Low complexity" evidence="3">
    <location>
        <begin position="610"/>
        <end position="623"/>
    </location>
</feature>
<feature type="compositionally biased region" description="Pro residues" evidence="3">
    <location>
        <begin position="632"/>
        <end position="642"/>
    </location>
</feature>
<feature type="glycosylation site" description="N-linked (GlcNAc...) asparagine" evidence="1">
    <location>
        <position position="234"/>
    </location>
</feature>
<feature type="disulfide bond" evidence="2">
    <location>
        <begin position="181"/>
        <end position="521"/>
    </location>
</feature>
<feature type="disulfide bond" evidence="2">
    <location>
        <begin position="185"/>
        <end position="528"/>
    </location>
</feature>
<feature type="disulfide bond" evidence="2">
    <location>
        <begin position="399"/>
        <end position="417"/>
    </location>
</feature>
<feature type="disulfide bond" evidence="2">
    <location>
        <begin position="484"/>
        <end position="584"/>
    </location>
</feature>
<feature type="disulfide bond" evidence="2">
    <location>
        <begin position="700"/>
        <end position="765"/>
    </location>
</feature>
<feature type="disulfide bond" evidence="2">
    <location>
        <begin position="713"/>
        <end position="775"/>
    </location>
</feature>
<feature type="disulfide bond" evidence="2">
    <location>
        <begin position="745"/>
        <end position="755"/>
    </location>
</feature>
<feature type="splice variant" id="VSP_030455" description="In isoform 2." evidence="4 5">
    <original>RRAPPGKCQIQPAQVKIRSRLIPFVPKEKFIP</original>
    <variation>SCKARSAMPGYVPAPSVCSSLTSQPFILQWWK</variation>
    <location>
        <begin position="577"/>
        <end position="608"/>
    </location>
</feature>
<feature type="splice variant" id="VSP_030456" description="In isoform 2." evidence="4 5">
    <location>
        <begin position="609"/>
        <end position="782"/>
    </location>
</feature>
<feature type="sequence variant" id="VAR_060163" description="In dbSNP:rs7158073.">
    <original>V</original>
    <variation>A</variation>
    <location>
        <position position="692"/>
    </location>
</feature>
<feature type="sequence conflict" description="In Ref. 1; AAQ88540." evidence="6" ref="1">
    <original>L</original>
    <variation>M</variation>
    <location>
        <position position="151"/>
    </location>
</feature>
<gene>
    <name type="primary">HHIPL1</name>
    <name type="synonym">HHIP2</name>
    <name type="synonym">KIAA1822</name>
    <name type="ORF">UNQ9245/PRO34761</name>
</gene>
<evidence type="ECO:0000255" key="1"/>
<evidence type="ECO:0000255" key="2">
    <source>
        <dbReference type="PROSITE-ProRule" id="PRU00196"/>
    </source>
</evidence>
<evidence type="ECO:0000256" key="3">
    <source>
        <dbReference type="SAM" id="MobiDB-lite"/>
    </source>
</evidence>
<evidence type="ECO:0000303" key="4">
    <source>
    </source>
</evidence>
<evidence type="ECO:0000303" key="5">
    <source>
    </source>
</evidence>
<evidence type="ECO:0000305" key="6"/>
<sequence>MARARAGALLALWVLGAAAHPQCLDFRPPFRPTQPLRLCAQYSDFGCCDEGRDAELTRRFWALASRVDAAEWAACAGYARDLLCQECSPYAAHLYDAEDPFTPLRTVPGLCQDYCLDMWHKCRGLFRHLSTDQELWALEGNLARFCRYLSLDDTDYCFPYLLVNKNLNSNLGHVVADAKGCLQLCLEEVANGLRNPVAMVHARDGTHRFFVAEQVGLVWAYLPDRSRLGKPFLNISRVVLTSPWEGDERGFLGIAFHPSFQHNRRLYVYYSVGIRSSEWIRISEFRVSEDDENAVDHSSERIILEVKEPASNHNGGQLLFGDDGYLYIFTGDGGMAGDPFGTFGNAQNKSALLGKVLRIDVDRKERGLPYGIPPDNPFVGDPAAQPEVYALGVRNMWRCSFDRGDPSSGTGRGRLFCGDVGQNKFEEVDVVERGGNYGWRAREGFECYDRSLCANTSLNDLLPIFAYPHTVGKSVTGGYVYRGCEYPNLNGLYIFGDFMSGRLMSLQENPGTGQWQYSEICMGHGQTCEFPGLINNYYPYIISFGEDEAGELYFMSTGEPSATAPRGVVYKIIDASRRAPPGKCQIQPAQVKIRSRLIPFVPKEKFIPKTRSTPRPTARAPTRAPRRGRPTAAPPAPTPRPARPTQQPGSRRGGGRRRGRLNSASRAFRDGEVRLVRPAGLSSGSGRVEVFVGGRWGTVCDDSWNISGAAVVCRQLGFAYAVRAVKRAEFGQGGSLPILLDDVRCAGWERNLLECQHNGVGTHNCEHDEDAGVVCSHQNPDL</sequence>
<accession>Q96JK4</accession>
<accession>A2RUF8</accession>
<accession>B2RN09</accession>
<accession>Q6UXX2</accession>
<proteinExistence type="evidence at protein level"/>
<protein>
    <recommendedName>
        <fullName>HHIP-like protein 1</fullName>
    </recommendedName>
</protein>